<name>Y251_SHEPA</name>
<feature type="chain" id="PRO_0000336260" description="UPF0102 protein Spea_0251">
    <location>
        <begin position="1"/>
        <end position="112"/>
    </location>
</feature>
<proteinExistence type="inferred from homology"/>
<keyword id="KW-1185">Reference proteome</keyword>
<dbReference type="EMBL" id="CP000851">
    <property type="protein sequence ID" value="ABV85579.1"/>
    <property type="molecule type" value="Genomic_DNA"/>
</dbReference>
<dbReference type="RefSeq" id="WP_012153520.1">
    <property type="nucleotide sequence ID" value="NC_009901.1"/>
</dbReference>
<dbReference type="SMR" id="A8GZ42"/>
<dbReference type="STRING" id="398579.Spea_0251"/>
<dbReference type="KEGG" id="spl:Spea_0251"/>
<dbReference type="eggNOG" id="COG0792">
    <property type="taxonomic scope" value="Bacteria"/>
</dbReference>
<dbReference type="HOGENOM" id="CLU_115353_1_0_6"/>
<dbReference type="OrthoDB" id="9794876at2"/>
<dbReference type="Proteomes" id="UP000002608">
    <property type="component" value="Chromosome"/>
</dbReference>
<dbReference type="GO" id="GO:0003676">
    <property type="term" value="F:nucleic acid binding"/>
    <property type="evidence" value="ECO:0007669"/>
    <property type="project" value="InterPro"/>
</dbReference>
<dbReference type="CDD" id="cd20736">
    <property type="entry name" value="PoNe_Nuclease"/>
    <property type="match status" value="1"/>
</dbReference>
<dbReference type="Gene3D" id="3.40.1350.10">
    <property type="match status" value="1"/>
</dbReference>
<dbReference type="HAMAP" id="MF_00048">
    <property type="entry name" value="UPF0102"/>
    <property type="match status" value="1"/>
</dbReference>
<dbReference type="InterPro" id="IPR011335">
    <property type="entry name" value="Restrct_endonuc-II-like"/>
</dbReference>
<dbReference type="InterPro" id="IPR011856">
    <property type="entry name" value="tRNA_endonuc-like_dom_sf"/>
</dbReference>
<dbReference type="InterPro" id="IPR003509">
    <property type="entry name" value="UPF0102_YraN-like"/>
</dbReference>
<dbReference type="NCBIfam" id="NF009150">
    <property type="entry name" value="PRK12497.1-3"/>
    <property type="match status" value="1"/>
</dbReference>
<dbReference type="NCBIfam" id="TIGR00252">
    <property type="entry name" value="YraN family protein"/>
    <property type="match status" value="1"/>
</dbReference>
<dbReference type="PANTHER" id="PTHR34039">
    <property type="entry name" value="UPF0102 PROTEIN YRAN"/>
    <property type="match status" value="1"/>
</dbReference>
<dbReference type="PANTHER" id="PTHR34039:SF1">
    <property type="entry name" value="UPF0102 PROTEIN YRAN"/>
    <property type="match status" value="1"/>
</dbReference>
<dbReference type="Pfam" id="PF02021">
    <property type="entry name" value="UPF0102"/>
    <property type="match status" value="1"/>
</dbReference>
<dbReference type="SUPFAM" id="SSF52980">
    <property type="entry name" value="Restriction endonuclease-like"/>
    <property type="match status" value="1"/>
</dbReference>
<organism>
    <name type="scientific">Shewanella pealeana (strain ATCC 700345 / ANG-SQ1)</name>
    <dbReference type="NCBI Taxonomy" id="398579"/>
    <lineage>
        <taxon>Bacteria</taxon>
        <taxon>Pseudomonadati</taxon>
        <taxon>Pseudomonadota</taxon>
        <taxon>Gammaproteobacteria</taxon>
        <taxon>Alteromonadales</taxon>
        <taxon>Shewanellaceae</taxon>
        <taxon>Shewanella</taxon>
    </lineage>
</organism>
<sequence>MAKNQNQGQIAEHSARRYLEQRGLTFVEQNVRYRFGEIDIVMKDGSDWVFVEVKYRSPSQYGGAVNALSQAQTLRIRKAASHYIQINRIDAICRFDVVAVDPDAMQWIRDAF</sequence>
<reference key="1">
    <citation type="submission" date="2007-10" db="EMBL/GenBank/DDBJ databases">
        <title>Complete sequence of Shewanella pealeana ATCC 700345.</title>
        <authorList>
            <consortium name="US DOE Joint Genome Institute"/>
            <person name="Copeland A."/>
            <person name="Lucas S."/>
            <person name="Lapidus A."/>
            <person name="Barry K."/>
            <person name="Glavina del Rio T."/>
            <person name="Dalin E."/>
            <person name="Tice H."/>
            <person name="Pitluck S."/>
            <person name="Chertkov O."/>
            <person name="Brettin T."/>
            <person name="Bruce D."/>
            <person name="Detter J.C."/>
            <person name="Han C."/>
            <person name="Schmutz J."/>
            <person name="Larimer F."/>
            <person name="Land M."/>
            <person name="Hauser L."/>
            <person name="Kyrpides N."/>
            <person name="Kim E."/>
            <person name="Zhao J.-S.Z."/>
            <person name="Manno D."/>
            <person name="Hawari J."/>
            <person name="Richardson P."/>
        </authorList>
    </citation>
    <scope>NUCLEOTIDE SEQUENCE [LARGE SCALE GENOMIC DNA]</scope>
    <source>
        <strain>ATCC 700345 / ANG-SQ1</strain>
    </source>
</reference>
<protein>
    <recommendedName>
        <fullName evidence="1">UPF0102 protein Spea_0251</fullName>
    </recommendedName>
</protein>
<accession>A8GZ42</accession>
<gene>
    <name type="ordered locus">Spea_0251</name>
</gene>
<evidence type="ECO:0000255" key="1">
    <source>
        <dbReference type="HAMAP-Rule" id="MF_00048"/>
    </source>
</evidence>
<comment type="similarity">
    <text evidence="1">Belongs to the UPF0102 family.</text>
</comment>